<sequence>MNKKKIISILKEKLNLKDIYVTEDNNHYEITAIGNVFKGLTQVKRQKKIYNPLIDLITENKIHAISIKSYSLEEWDKNQK</sequence>
<feature type="chain" id="PRO_0000201225" description="Uncharacterized protein BUsg_372">
    <location>
        <begin position="1"/>
        <end position="80"/>
    </location>
</feature>
<comment type="similarity">
    <text evidence="1">Belongs to the BolA/IbaG family.</text>
</comment>
<gene>
    <name type="ordered locus">BUsg_372</name>
</gene>
<evidence type="ECO:0000305" key="1"/>
<reference key="1">
    <citation type="journal article" date="2002" name="Science">
        <title>50 million years of genomic stasis in endosymbiotic bacteria.</title>
        <authorList>
            <person name="Tamas I."/>
            <person name="Klasson L."/>
            <person name="Canbaeck B."/>
            <person name="Naeslund A.K."/>
            <person name="Eriksson A.-S."/>
            <person name="Wernegreen J.J."/>
            <person name="Sandstroem J.P."/>
            <person name="Moran N.A."/>
            <person name="Andersson S.G.E."/>
        </authorList>
    </citation>
    <scope>NUCLEOTIDE SEQUENCE [LARGE SCALE GENOMIC DNA]</scope>
    <source>
        <strain>Sg</strain>
    </source>
</reference>
<name>Y372_BUCAP</name>
<accession>Q8K9G5</accession>
<organism>
    <name type="scientific">Buchnera aphidicola subsp. Schizaphis graminum (strain Sg)</name>
    <dbReference type="NCBI Taxonomy" id="198804"/>
    <lineage>
        <taxon>Bacteria</taxon>
        <taxon>Pseudomonadati</taxon>
        <taxon>Pseudomonadota</taxon>
        <taxon>Gammaproteobacteria</taxon>
        <taxon>Enterobacterales</taxon>
        <taxon>Erwiniaceae</taxon>
        <taxon>Buchnera</taxon>
    </lineage>
</organism>
<protein>
    <recommendedName>
        <fullName>Uncharacterized protein BUsg_372</fullName>
    </recommendedName>
</protein>
<dbReference type="EMBL" id="AE013218">
    <property type="protein sequence ID" value="AAM67924.1"/>
    <property type="molecule type" value="Genomic_DNA"/>
</dbReference>
<dbReference type="RefSeq" id="WP_011053891.1">
    <property type="nucleotide sequence ID" value="NC_004061.1"/>
</dbReference>
<dbReference type="SMR" id="Q8K9G5"/>
<dbReference type="STRING" id="198804.BUsg_372"/>
<dbReference type="GeneID" id="93003842"/>
<dbReference type="KEGG" id="bas:BUsg_372"/>
<dbReference type="eggNOG" id="COG5007">
    <property type="taxonomic scope" value="Bacteria"/>
</dbReference>
<dbReference type="HOGENOM" id="CLU_109462_4_1_6"/>
<dbReference type="Proteomes" id="UP000000416">
    <property type="component" value="Chromosome"/>
</dbReference>
<dbReference type="Gene3D" id="3.30.300.90">
    <property type="entry name" value="BolA-like"/>
    <property type="match status" value="1"/>
</dbReference>
<dbReference type="InterPro" id="IPR002634">
    <property type="entry name" value="BolA"/>
</dbReference>
<dbReference type="InterPro" id="IPR036065">
    <property type="entry name" value="BolA-like_sf"/>
</dbReference>
<dbReference type="InterPro" id="IPR050961">
    <property type="entry name" value="BolA/IbaG_stress_morph_reg"/>
</dbReference>
<dbReference type="PANTHER" id="PTHR46229:SF4">
    <property type="entry name" value="ACID STRESS PROTEIN IBAG"/>
    <property type="match status" value="1"/>
</dbReference>
<dbReference type="PANTHER" id="PTHR46229">
    <property type="entry name" value="BOLA TRANSCRIPTION REGULATOR"/>
    <property type="match status" value="1"/>
</dbReference>
<dbReference type="Pfam" id="PF01722">
    <property type="entry name" value="BolA"/>
    <property type="match status" value="1"/>
</dbReference>
<dbReference type="PIRSF" id="PIRSF003113">
    <property type="entry name" value="BolA"/>
    <property type="match status" value="1"/>
</dbReference>
<dbReference type="SUPFAM" id="SSF82657">
    <property type="entry name" value="BolA-like"/>
    <property type="match status" value="1"/>
</dbReference>
<proteinExistence type="inferred from homology"/>